<dbReference type="EMBL" id="AL929309">
    <property type="protein sequence ID" value="CAM14260.1"/>
    <property type="molecule type" value="Genomic_DNA"/>
</dbReference>
<dbReference type="EMBL" id="BC139871">
    <property type="protein sequence ID" value="AAI39872.1"/>
    <property type="molecule type" value="mRNA"/>
</dbReference>
<dbReference type="RefSeq" id="NP_001092892.1">
    <property type="nucleotide sequence ID" value="NM_001099422.1"/>
</dbReference>
<dbReference type="SMR" id="A2AV37"/>
<dbReference type="FunCoup" id="A2AV37">
    <property type="interactions" value="1512"/>
</dbReference>
<dbReference type="STRING" id="7955.ENSDARP00000094733"/>
<dbReference type="PaxDb" id="7955-ENSDARP00000094733"/>
<dbReference type="Ensembl" id="ENSDART00000103957">
    <property type="protein sequence ID" value="ENSDARP00000094733"/>
    <property type="gene ID" value="ENSDARG00000051899"/>
</dbReference>
<dbReference type="Ensembl" id="ENSDART00000193367">
    <property type="protein sequence ID" value="ENSDARP00000145185"/>
    <property type="gene ID" value="ENSDARG00000114148"/>
</dbReference>
<dbReference type="GeneID" id="567832"/>
<dbReference type="KEGG" id="dre:567832"/>
<dbReference type="AGR" id="ZFIN:ZDB-GENE-061207-36"/>
<dbReference type="CTD" id="283849"/>
<dbReference type="ZFIN" id="ZDB-GENE-061207-36">
    <property type="gene designation" value="exoc3l1"/>
</dbReference>
<dbReference type="eggNOG" id="KOG2286">
    <property type="taxonomic scope" value="Eukaryota"/>
</dbReference>
<dbReference type="HOGENOM" id="CLU_016260_1_0_1"/>
<dbReference type="InParanoid" id="A2AV37"/>
<dbReference type="OMA" id="REQEPNT"/>
<dbReference type="OrthoDB" id="10047020at2759"/>
<dbReference type="PhylomeDB" id="A2AV37"/>
<dbReference type="TreeFam" id="TF314979"/>
<dbReference type="PRO" id="PR:A2AV37"/>
<dbReference type="Proteomes" id="UP000000437">
    <property type="component" value="Alternate scaffold 25"/>
</dbReference>
<dbReference type="Proteomes" id="UP000000437">
    <property type="component" value="Chromosome 25"/>
</dbReference>
<dbReference type="Bgee" id="ENSDARG00000051899">
    <property type="expression patterns" value="Expressed in mature ovarian follicle and 19 other cell types or tissues"/>
</dbReference>
<dbReference type="GO" id="GO:0000145">
    <property type="term" value="C:exocyst"/>
    <property type="evidence" value="ECO:0000318"/>
    <property type="project" value="GO_Central"/>
</dbReference>
<dbReference type="GO" id="GO:0030133">
    <property type="term" value="C:transport vesicle"/>
    <property type="evidence" value="ECO:0007669"/>
    <property type="project" value="UniProtKB-SubCell"/>
</dbReference>
<dbReference type="GO" id="GO:0000149">
    <property type="term" value="F:SNARE binding"/>
    <property type="evidence" value="ECO:0000318"/>
    <property type="project" value="GO_Central"/>
</dbReference>
<dbReference type="GO" id="GO:0051601">
    <property type="term" value="P:exocyst localization"/>
    <property type="evidence" value="ECO:0000318"/>
    <property type="project" value="GO_Central"/>
</dbReference>
<dbReference type="GO" id="GO:0006887">
    <property type="term" value="P:exocytosis"/>
    <property type="evidence" value="ECO:0000318"/>
    <property type="project" value="GO_Central"/>
</dbReference>
<dbReference type="FunFam" id="1.10.357.70:FF:000001">
    <property type="entry name" value="Exocyst complex component 3"/>
    <property type="match status" value="1"/>
</dbReference>
<dbReference type="FunFam" id="1.10.357.50:FF:000008">
    <property type="entry name" value="Exocyst complex component 3-like 1"/>
    <property type="match status" value="1"/>
</dbReference>
<dbReference type="Gene3D" id="1.10.357.50">
    <property type="match status" value="1"/>
</dbReference>
<dbReference type="Gene3D" id="1.10.357.70">
    <property type="entry name" value="Exocyst complex component Sec6, C-terminal domain"/>
    <property type="match status" value="1"/>
</dbReference>
<dbReference type="InterPro" id="IPR010326">
    <property type="entry name" value="EXOC3/Sec6"/>
</dbReference>
<dbReference type="InterPro" id="IPR042532">
    <property type="entry name" value="EXOC3/Sec6_C"/>
</dbReference>
<dbReference type="PANTHER" id="PTHR21292:SF12">
    <property type="entry name" value="EXOCYST COMPLEX COMPONENT 3-LIKE PROTEIN"/>
    <property type="match status" value="1"/>
</dbReference>
<dbReference type="PANTHER" id="PTHR21292">
    <property type="entry name" value="EXOCYST COMPLEX COMPONENT SEC6-RELATED"/>
    <property type="match status" value="1"/>
</dbReference>
<dbReference type="Pfam" id="PF06046">
    <property type="entry name" value="Sec6"/>
    <property type="match status" value="1"/>
</dbReference>
<gene>
    <name type="primary">exoc3l1</name>
    <name type="ORF">si:ch211-51l3.1</name>
</gene>
<proteinExistence type="evidence at transcript level"/>
<reference key="1">
    <citation type="journal article" date="2013" name="Nature">
        <title>The zebrafish reference genome sequence and its relationship to the human genome.</title>
        <authorList>
            <person name="Howe K."/>
            <person name="Clark M.D."/>
            <person name="Torroja C.F."/>
            <person name="Torrance J."/>
            <person name="Berthelot C."/>
            <person name="Muffato M."/>
            <person name="Collins J.E."/>
            <person name="Humphray S."/>
            <person name="McLaren K."/>
            <person name="Matthews L."/>
            <person name="McLaren S."/>
            <person name="Sealy I."/>
            <person name="Caccamo M."/>
            <person name="Churcher C."/>
            <person name="Scott C."/>
            <person name="Barrett J.C."/>
            <person name="Koch R."/>
            <person name="Rauch G.J."/>
            <person name="White S."/>
            <person name="Chow W."/>
            <person name="Kilian B."/>
            <person name="Quintais L.T."/>
            <person name="Guerra-Assuncao J.A."/>
            <person name="Zhou Y."/>
            <person name="Gu Y."/>
            <person name="Yen J."/>
            <person name="Vogel J.H."/>
            <person name="Eyre T."/>
            <person name="Redmond S."/>
            <person name="Banerjee R."/>
            <person name="Chi J."/>
            <person name="Fu B."/>
            <person name="Langley E."/>
            <person name="Maguire S.F."/>
            <person name="Laird G.K."/>
            <person name="Lloyd D."/>
            <person name="Kenyon E."/>
            <person name="Donaldson S."/>
            <person name="Sehra H."/>
            <person name="Almeida-King J."/>
            <person name="Loveland J."/>
            <person name="Trevanion S."/>
            <person name="Jones M."/>
            <person name="Quail M."/>
            <person name="Willey D."/>
            <person name="Hunt A."/>
            <person name="Burton J."/>
            <person name="Sims S."/>
            <person name="McLay K."/>
            <person name="Plumb B."/>
            <person name="Davis J."/>
            <person name="Clee C."/>
            <person name="Oliver K."/>
            <person name="Clark R."/>
            <person name="Riddle C."/>
            <person name="Elliot D."/>
            <person name="Threadgold G."/>
            <person name="Harden G."/>
            <person name="Ware D."/>
            <person name="Begum S."/>
            <person name="Mortimore B."/>
            <person name="Kerry G."/>
            <person name="Heath P."/>
            <person name="Phillimore B."/>
            <person name="Tracey A."/>
            <person name="Corby N."/>
            <person name="Dunn M."/>
            <person name="Johnson C."/>
            <person name="Wood J."/>
            <person name="Clark S."/>
            <person name="Pelan S."/>
            <person name="Griffiths G."/>
            <person name="Smith M."/>
            <person name="Glithero R."/>
            <person name="Howden P."/>
            <person name="Barker N."/>
            <person name="Lloyd C."/>
            <person name="Stevens C."/>
            <person name="Harley J."/>
            <person name="Holt K."/>
            <person name="Panagiotidis G."/>
            <person name="Lovell J."/>
            <person name="Beasley H."/>
            <person name="Henderson C."/>
            <person name="Gordon D."/>
            <person name="Auger K."/>
            <person name="Wright D."/>
            <person name="Collins J."/>
            <person name="Raisen C."/>
            <person name="Dyer L."/>
            <person name="Leung K."/>
            <person name="Robertson L."/>
            <person name="Ambridge K."/>
            <person name="Leongamornlert D."/>
            <person name="McGuire S."/>
            <person name="Gilderthorp R."/>
            <person name="Griffiths C."/>
            <person name="Manthravadi D."/>
            <person name="Nichol S."/>
            <person name="Barker G."/>
            <person name="Whitehead S."/>
            <person name="Kay M."/>
            <person name="Brown J."/>
            <person name="Murnane C."/>
            <person name="Gray E."/>
            <person name="Humphries M."/>
            <person name="Sycamore N."/>
            <person name="Barker D."/>
            <person name="Saunders D."/>
            <person name="Wallis J."/>
            <person name="Babbage A."/>
            <person name="Hammond S."/>
            <person name="Mashreghi-Mohammadi M."/>
            <person name="Barr L."/>
            <person name="Martin S."/>
            <person name="Wray P."/>
            <person name="Ellington A."/>
            <person name="Matthews N."/>
            <person name="Ellwood M."/>
            <person name="Woodmansey R."/>
            <person name="Clark G."/>
            <person name="Cooper J."/>
            <person name="Tromans A."/>
            <person name="Grafham D."/>
            <person name="Skuce C."/>
            <person name="Pandian R."/>
            <person name="Andrews R."/>
            <person name="Harrison E."/>
            <person name="Kimberley A."/>
            <person name="Garnett J."/>
            <person name="Fosker N."/>
            <person name="Hall R."/>
            <person name="Garner P."/>
            <person name="Kelly D."/>
            <person name="Bird C."/>
            <person name="Palmer S."/>
            <person name="Gehring I."/>
            <person name="Berger A."/>
            <person name="Dooley C.M."/>
            <person name="Ersan-Urun Z."/>
            <person name="Eser C."/>
            <person name="Geiger H."/>
            <person name="Geisler M."/>
            <person name="Karotki L."/>
            <person name="Kirn A."/>
            <person name="Konantz J."/>
            <person name="Konantz M."/>
            <person name="Oberlander M."/>
            <person name="Rudolph-Geiger S."/>
            <person name="Teucke M."/>
            <person name="Lanz C."/>
            <person name="Raddatz G."/>
            <person name="Osoegawa K."/>
            <person name="Zhu B."/>
            <person name="Rapp A."/>
            <person name="Widaa S."/>
            <person name="Langford C."/>
            <person name="Yang F."/>
            <person name="Schuster S.C."/>
            <person name="Carter N.P."/>
            <person name="Harrow J."/>
            <person name="Ning Z."/>
            <person name="Herrero J."/>
            <person name="Searle S.M."/>
            <person name="Enright A."/>
            <person name="Geisler R."/>
            <person name="Plasterk R.H."/>
            <person name="Lee C."/>
            <person name="Westerfield M."/>
            <person name="de Jong P.J."/>
            <person name="Zon L.I."/>
            <person name="Postlethwait J.H."/>
            <person name="Nusslein-Volhard C."/>
            <person name="Hubbard T.J."/>
            <person name="Roest Crollius H."/>
            <person name="Rogers J."/>
            <person name="Stemple D.L."/>
        </authorList>
    </citation>
    <scope>NUCLEOTIDE SEQUENCE [LARGE SCALE GENOMIC DNA]</scope>
    <source>
        <strain>Tuebingen</strain>
    </source>
</reference>
<reference key="2">
    <citation type="submission" date="2007-04" db="EMBL/GenBank/DDBJ databases">
        <authorList>
            <consortium name="NIH - Zebrafish Gene Collection (ZGC) project"/>
        </authorList>
    </citation>
    <scope>NUCLEOTIDE SEQUENCE [LARGE SCALE MRNA]</scope>
    <source>
        <tissue>Embryo</tissue>
    </source>
</reference>
<accession>A2AV37</accession>
<accession>A5D6T1</accession>
<feature type="chain" id="PRO_0000309476" description="Exocyst complex component 3-like protein">
    <location>
        <begin position="1"/>
        <end position="780"/>
    </location>
</feature>
<feature type="sequence conflict" description="In Ref. 2; AAI39872." evidence="2" ref="2">
    <original>T</original>
    <variation>A</variation>
    <location>
        <position position="262"/>
    </location>
</feature>
<feature type="sequence conflict" description="In Ref. 2; AAI39872." evidence="2" ref="2">
    <original>K</original>
    <variation>N</variation>
    <location>
        <position position="699"/>
    </location>
</feature>
<protein>
    <recommendedName>
        <fullName>Exocyst complex component 3-like protein</fullName>
    </recommendedName>
</protein>
<comment type="function">
    <text evidence="1">As part of the exocyst, may play a role in regulated exocytosis.</text>
</comment>
<comment type="subcellular location">
    <subcellularLocation>
        <location evidence="1">Cytoplasmic vesicle</location>
        <location evidence="1">Secretory vesicle</location>
    </subcellularLocation>
</comment>
<comment type="similarity">
    <text evidence="2">Belongs to the SEC6 family.</text>
</comment>
<organism>
    <name type="scientific">Danio rerio</name>
    <name type="common">Zebrafish</name>
    <name type="synonym">Brachydanio rerio</name>
    <dbReference type="NCBI Taxonomy" id="7955"/>
    <lineage>
        <taxon>Eukaryota</taxon>
        <taxon>Metazoa</taxon>
        <taxon>Chordata</taxon>
        <taxon>Craniata</taxon>
        <taxon>Vertebrata</taxon>
        <taxon>Euteleostomi</taxon>
        <taxon>Actinopterygii</taxon>
        <taxon>Neopterygii</taxon>
        <taxon>Teleostei</taxon>
        <taxon>Ostariophysi</taxon>
        <taxon>Cypriniformes</taxon>
        <taxon>Danionidae</taxon>
        <taxon>Danioninae</taxon>
        <taxon>Danio</taxon>
    </lineage>
</organism>
<evidence type="ECO:0000250" key="1"/>
<evidence type="ECO:0000305" key="2"/>
<sequence>MSDGDKNGRDNHEEALVPVEVWQELERAECLARGAALKWASGVFCRPEHLEKLGQYKKRESQRTASIQSRLKSVVQSYLEGVDWGLGQLREARAELRGVSHDLYKANLESRKNSEEVTTLETLREISVSHCQLLAAVSNLPRLYKVRSMVLETERLVESRRLLEAHARLMELERWQDEVLLQLQGPRGSSGTELNSEDEELVRNYFSGVGRLVDALAKELWAVVGSGLSLAHQNPTPFVSAVRIVEREEALDQFFLEERRSTSGHNIPMPAGRPRNWRDRFFKVMEEAVSARFRSVSYLHTRGPGLASHLSALQHCIMGDLSTVRHCLEQCVPAHYHLTRAYLHFCHQFLQTHLGLVSGWELEGGEIFAVLNWVLHIYNSSEMMGEPALLAELEIENLGPLISQEGLEQLQNKYVQKVRKSVSEWMQKALEVELTDWQRDQEPDIDHEGYYHTSLPTIITQMLEENARVALMISEALRDQTIQMGLYEMEKLLSRFRDAVIEFGKEHRKDPTVNKFYLHYLLACINNCIILKTSTESLQQQICSFVSNRYSRIPLGPLAALDRAVRKACRLVMDHLLFELQPHLQELLSSTWLDQGDVTLNMCGVLERHCELYNRVRQPCRQRLKEECQWLTVVEYVRAVMQKRLVCRSSDEQKQLAQRMTQDAQQLRDHLQSMEIDGTIGEVNPTALIAALADIINLKDPGMLLLEISGLLSKYPDISEEHVSVLLDIRGDVPKEVRKSVLDFLDQSAPPLPPGYRPIFTEILVPSSSIPFCLPTAKCT</sequence>
<keyword id="KW-0968">Cytoplasmic vesicle</keyword>
<keyword id="KW-0268">Exocytosis</keyword>
<keyword id="KW-1185">Reference proteome</keyword>
<name>EX3L1_DANRE</name>